<name>IF1_SALTY</name>
<reference key="1">
    <citation type="journal article" date="2001" name="Nature">
        <title>Complete genome sequence of Salmonella enterica serovar Typhimurium LT2.</title>
        <authorList>
            <person name="McClelland M."/>
            <person name="Sanderson K.E."/>
            <person name="Spieth J."/>
            <person name="Clifton S.W."/>
            <person name="Latreille P."/>
            <person name="Courtney L."/>
            <person name="Porwollik S."/>
            <person name="Ali J."/>
            <person name="Dante M."/>
            <person name="Du F."/>
            <person name="Hou S."/>
            <person name="Layman D."/>
            <person name="Leonard S."/>
            <person name="Nguyen C."/>
            <person name="Scott K."/>
            <person name="Holmes A."/>
            <person name="Grewal N."/>
            <person name="Mulvaney E."/>
            <person name="Ryan E."/>
            <person name="Sun H."/>
            <person name="Florea L."/>
            <person name="Miller W."/>
            <person name="Stoneking T."/>
            <person name="Nhan M."/>
            <person name="Waterston R."/>
            <person name="Wilson R.K."/>
        </authorList>
    </citation>
    <scope>NUCLEOTIDE SEQUENCE [LARGE SCALE GENOMIC DNA]</scope>
    <source>
        <strain>LT2 / SGSC1412 / ATCC 700720</strain>
    </source>
</reference>
<gene>
    <name evidence="2" type="primary">infA</name>
    <name type="ordered locus">STM0953</name>
</gene>
<proteinExistence type="inferred from homology"/>
<dbReference type="EMBL" id="AE006468">
    <property type="protein sequence ID" value="AAL19888.1"/>
    <property type="molecule type" value="Genomic_DNA"/>
</dbReference>
<dbReference type="RefSeq" id="NP_459929.1">
    <property type="nucleotide sequence ID" value="NC_003197.2"/>
</dbReference>
<dbReference type="RefSeq" id="WP_001040187.1">
    <property type="nucleotide sequence ID" value="NC_003197.2"/>
</dbReference>
<dbReference type="SMR" id="P69226"/>
<dbReference type="STRING" id="99287.STM0953"/>
<dbReference type="PaxDb" id="99287-STM0953"/>
<dbReference type="GeneID" id="1252472"/>
<dbReference type="GeneID" id="93776536"/>
<dbReference type="KEGG" id="stm:STM0953"/>
<dbReference type="PATRIC" id="fig|99287.12.peg.1004"/>
<dbReference type="HOGENOM" id="CLU_151267_1_0_6"/>
<dbReference type="OMA" id="EGHQCLC"/>
<dbReference type="PhylomeDB" id="P69226"/>
<dbReference type="BioCyc" id="SENT99287:STM0953-MONOMER"/>
<dbReference type="PRO" id="PR:P69226"/>
<dbReference type="Proteomes" id="UP000001014">
    <property type="component" value="Chromosome"/>
</dbReference>
<dbReference type="GO" id="GO:0005829">
    <property type="term" value="C:cytosol"/>
    <property type="evidence" value="ECO:0000318"/>
    <property type="project" value="GO_Central"/>
</dbReference>
<dbReference type="GO" id="GO:0043022">
    <property type="term" value="F:ribosome binding"/>
    <property type="evidence" value="ECO:0000318"/>
    <property type="project" value="GO_Central"/>
</dbReference>
<dbReference type="GO" id="GO:0019843">
    <property type="term" value="F:rRNA binding"/>
    <property type="evidence" value="ECO:0007669"/>
    <property type="project" value="UniProtKB-UniRule"/>
</dbReference>
<dbReference type="GO" id="GO:0003743">
    <property type="term" value="F:translation initiation factor activity"/>
    <property type="evidence" value="ECO:0007669"/>
    <property type="project" value="UniProtKB-UniRule"/>
</dbReference>
<dbReference type="CDD" id="cd04451">
    <property type="entry name" value="S1_IF1"/>
    <property type="match status" value="1"/>
</dbReference>
<dbReference type="FunFam" id="2.40.50.140:FF:000002">
    <property type="entry name" value="Translation initiation factor IF-1"/>
    <property type="match status" value="1"/>
</dbReference>
<dbReference type="Gene3D" id="2.40.50.140">
    <property type="entry name" value="Nucleic acid-binding proteins"/>
    <property type="match status" value="1"/>
</dbReference>
<dbReference type="HAMAP" id="MF_00075">
    <property type="entry name" value="IF_1"/>
    <property type="match status" value="1"/>
</dbReference>
<dbReference type="InterPro" id="IPR012340">
    <property type="entry name" value="NA-bd_OB-fold"/>
</dbReference>
<dbReference type="InterPro" id="IPR006196">
    <property type="entry name" value="RNA-binding_domain_S1_IF1"/>
</dbReference>
<dbReference type="InterPro" id="IPR003029">
    <property type="entry name" value="S1_domain"/>
</dbReference>
<dbReference type="InterPro" id="IPR004368">
    <property type="entry name" value="TIF_IF1"/>
</dbReference>
<dbReference type="NCBIfam" id="TIGR00008">
    <property type="entry name" value="infA"/>
    <property type="match status" value="1"/>
</dbReference>
<dbReference type="PANTHER" id="PTHR33370">
    <property type="entry name" value="TRANSLATION INITIATION FACTOR IF-1, CHLOROPLASTIC"/>
    <property type="match status" value="1"/>
</dbReference>
<dbReference type="PANTHER" id="PTHR33370:SF1">
    <property type="entry name" value="TRANSLATION INITIATION FACTOR IF-1, CHLOROPLASTIC"/>
    <property type="match status" value="1"/>
</dbReference>
<dbReference type="Pfam" id="PF01176">
    <property type="entry name" value="eIF-1a"/>
    <property type="match status" value="1"/>
</dbReference>
<dbReference type="SMART" id="SM00316">
    <property type="entry name" value="S1"/>
    <property type="match status" value="1"/>
</dbReference>
<dbReference type="SUPFAM" id="SSF50249">
    <property type="entry name" value="Nucleic acid-binding proteins"/>
    <property type="match status" value="1"/>
</dbReference>
<dbReference type="PROSITE" id="PS50832">
    <property type="entry name" value="S1_IF1_TYPE"/>
    <property type="match status" value="1"/>
</dbReference>
<accession>P69226</accession>
<accession>P02998</accession>
<keyword id="KW-0963">Cytoplasm</keyword>
<keyword id="KW-0396">Initiation factor</keyword>
<keyword id="KW-0648">Protein biosynthesis</keyword>
<keyword id="KW-1185">Reference proteome</keyword>
<keyword id="KW-0694">RNA-binding</keyword>
<keyword id="KW-0699">rRNA-binding</keyword>
<protein>
    <recommendedName>
        <fullName evidence="2">Translation initiation factor IF-1</fullName>
    </recommendedName>
</protein>
<organism>
    <name type="scientific">Salmonella typhimurium (strain LT2 / SGSC1412 / ATCC 700720)</name>
    <dbReference type="NCBI Taxonomy" id="99287"/>
    <lineage>
        <taxon>Bacteria</taxon>
        <taxon>Pseudomonadati</taxon>
        <taxon>Pseudomonadota</taxon>
        <taxon>Gammaproteobacteria</taxon>
        <taxon>Enterobacterales</taxon>
        <taxon>Enterobacteriaceae</taxon>
        <taxon>Salmonella</taxon>
    </lineage>
</organism>
<evidence type="ECO:0000250" key="1"/>
<evidence type="ECO:0000255" key="2">
    <source>
        <dbReference type="HAMAP-Rule" id="MF_00075"/>
    </source>
</evidence>
<comment type="function">
    <text evidence="2">One of the essential components for the initiation of protein synthesis. Stabilizes the binding of IF-2 and IF-3 on the 30S subunit to which N-formylmethionyl-tRNA(fMet) subsequently binds. Helps modulate mRNA selection, yielding the 30S pre-initiation complex (PIC). Upon addition of the 50S ribosomal subunit IF-1, IF-2 and IF-3 are released leaving the mature 70S translation initiation complex.</text>
</comment>
<comment type="subunit">
    <text evidence="2">Component of the 30S ribosomal translation pre-initiation complex which assembles on the 30S ribosome in the order IF-2 and IF-3, IF-1 and N-formylmethionyl-tRNA(fMet); mRNA recruitment can occur at any time during PIC assembly.</text>
</comment>
<comment type="subcellular location">
    <subcellularLocation>
        <location evidence="2">Cytoplasm</location>
    </subcellularLocation>
</comment>
<comment type="similarity">
    <text evidence="2">Belongs to the IF-1 family.</text>
</comment>
<feature type="initiator methionine" description="Removed" evidence="1">
    <location>
        <position position="1"/>
    </location>
</feature>
<feature type="chain" id="PRO_0000095860" description="Translation initiation factor IF-1">
    <location>
        <begin position="2"/>
        <end position="72"/>
    </location>
</feature>
<feature type="domain" description="S1-like" evidence="2">
    <location>
        <begin position="2"/>
        <end position="72"/>
    </location>
</feature>
<sequence length="72" mass="8250">MAKEDNIEMQGTVLETLPNTMFRVELENGHVVTAHISGKMRKNYIRILTGDKVTVELTPYDLSKGRIVFRSR</sequence>